<reference key="1">
    <citation type="journal article" date="2006" name="Nat. Biotechnol.">
        <title>Genome sequence of the ubiquitous hydrocarbon-degrading marine bacterium Alcanivorax borkumensis.</title>
        <authorList>
            <person name="Schneiker S."/>
            <person name="Martins dos Santos V.A.P."/>
            <person name="Bartels D."/>
            <person name="Bekel T."/>
            <person name="Brecht M."/>
            <person name="Buhrmester J."/>
            <person name="Chernikova T.N."/>
            <person name="Denaro R."/>
            <person name="Ferrer M."/>
            <person name="Gertler C."/>
            <person name="Goesmann A."/>
            <person name="Golyshina O.V."/>
            <person name="Kaminski F."/>
            <person name="Khachane A.N."/>
            <person name="Lang S."/>
            <person name="Linke B."/>
            <person name="McHardy A.C."/>
            <person name="Meyer F."/>
            <person name="Nechitaylo T."/>
            <person name="Puehler A."/>
            <person name="Regenhardt D."/>
            <person name="Rupp O."/>
            <person name="Sabirova J.S."/>
            <person name="Selbitschka W."/>
            <person name="Yakimov M.M."/>
            <person name="Timmis K.N."/>
            <person name="Vorhoelter F.-J."/>
            <person name="Weidner S."/>
            <person name="Kaiser O."/>
            <person name="Golyshin P.N."/>
        </authorList>
    </citation>
    <scope>NUCLEOTIDE SEQUENCE [LARGE SCALE GENOMIC DNA]</scope>
    <source>
        <strain>ATCC 700651 / DSM 11573 / NCIMB 13689 / SK2</strain>
    </source>
</reference>
<comment type="function">
    <text evidence="1">Catalyzes the decarboxylation of S-adenosylmethionine to S-adenosylmethioninamine (dcAdoMet), the propylamine donor required for the synthesis of the polyamines spermine and spermidine from the diamine putrescine.</text>
</comment>
<comment type="catalytic activity">
    <reaction evidence="1">
        <text>S-adenosyl-L-methionine + H(+) = S-adenosyl 3-(methylsulfanyl)propylamine + CO2</text>
        <dbReference type="Rhea" id="RHEA:15981"/>
        <dbReference type="ChEBI" id="CHEBI:15378"/>
        <dbReference type="ChEBI" id="CHEBI:16526"/>
        <dbReference type="ChEBI" id="CHEBI:57443"/>
        <dbReference type="ChEBI" id="CHEBI:59789"/>
        <dbReference type="EC" id="4.1.1.50"/>
    </reaction>
</comment>
<comment type="cofactor">
    <cofactor evidence="1">
        <name>pyruvate</name>
        <dbReference type="ChEBI" id="CHEBI:15361"/>
    </cofactor>
    <text evidence="1">Binds 1 pyruvoyl group covalently per subunit.</text>
</comment>
<comment type="pathway">
    <text evidence="1">Amine and polyamine biosynthesis; S-adenosylmethioninamine biosynthesis; S-adenosylmethioninamine from S-adenosyl-L-methionine: step 1/1.</text>
</comment>
<comment type="subunit">
    <text evidence="1">Heterooctamer of four alpha and four beta chains arranged as a tetramer of alpha/beta heterodimers.</text>
</comment>
<comment type="PTM">
    <text evidence="1">Is synthesized initially as an inactive proenzyme. Formation of the active enzyme involves a self-maturation process in which the active site pyruvoyl group is generated from an internal serine residue via an autocatalytic post-translational modification. Two non-identical subunits are generated from the proenzyme in this reaction, and the pyruvate is formed at the N-terminus of the alpha chain, which is derived from the carboxyl end of the proenzyme. The post-translation cleavage follows an unusual pathway, termed non-hydrolytic serinolysis, in which the side chain hydroxyl group of the serine supplies its oxygen atom to form the C-terminus of the beta chain, while the remainder of the serine residue undergoes an oxidative deamination to produce ammonia and the pyruvoyl group blocking the N-terminus of the alpha chain.</text>
</comment>
<comment type="similarity">
    <text evidence="1">Belongs to the prokaryotic AdoMetDC family. Type 2 subfamily.</text>
</comment>
<dbReference type="EC" id="4.1.1.50" evidence="1"/>
<dbReference type="EMBL" id="AM286690">
    <property type="protein sequence ID" value="CAL17469.1"/>
    <property type="molecule type" value="Genomic_DNA"/>
</dbReference>
<dbReference type="STRING" id="393595.ABO_2021"/>
<dbReference type="KEGG" id="abo:ABO_2021"/>
<dbReference type="eggNOG" id="COG1586">
    <property type="taxonomic scope" value="Bacteria"/>
</dbReference>
<dbReference type="HOGENOM" id="CLU_092007_0_0_6"/>
<dbReference type="OrthoDB" id="5290709at2"/>
<dbReference type="UniPathway" id="UPA00331">
    <property type="reaction ID" value="UER00451"/>
</dbReference>
<dbReference type="Proteomes" id="UP000008871">
    <property type="component" value="Chromosome"/>
</dbReference>
<dbReference type="GO" id="GO:0005829">
    <property type="term" value="C:cytosol"/>
    <property type="evidence" value="ECO:0007669"/>
    <property type="project" value="TreeGrafter"/>
</dbReference>
<dbReference type="GO" id="GO:0004014">
    <property type="term" value="F:adenosylmethionine decarboxylase activity"/>
    <property type="evidence" value="ECO:0007669"/>
    <property type="project" value="UniProtKB-UniRule"/>
</dbReference>
<dbReference type="GO" id="GO:0008295">
    <property type="term" value="P:spermidine biosynthetic process"/>
    <property type="evidence" value="ECO:0007669"/>
    <property type="project" value="UniProtKB-UniRule"/>
</dbReference>
<dbReference type="Gene3D" id="3.60.90.10">
    <property type="entry name" value="S-adenosylmethionine decarboxylase"/>
    <property type="match status" value="1"/>
</dbReference>
<dbReference type="HAMAP" id="MF_00465">
    <property type="entry name" value="AdoMetDC_2"/>
    <property type="match status" value="1"/>
</dbReference>
<dbReference type="InterPro" id="IPR003826">
    <property type="entry name" value="AdoMetDC_fam_prok"/>
</dbReference>
<dbReference type="InterPro" id="IPR009165">
    <property type="entry name" value="S-AdoMet_deCO2ase_bac"/>
</dbReference>
<dbReference type="InterPro" id="IPR016067">
    <property type="entry name" value="S-AdoMet_deCO2ase_core"/>
</dbReference>
<dbReference type="NCBIfam" id="TIGR03331">
    <property type="entry name" value="SAM_DCase_Eco"/>
    <property type="match status" value="1"/>
</dbReference>
<dbReference type="PANTHER" id="PTHR33866">
    <property type="entry name" value="S-ADENOSYLMETHIONINE DECARBOXYLASE PROENZYME"/>
    <property type="match status" value="1"/>
</dbReference>
<dbReference type="PANTHER" id="PTHR33866:SF1">
    <property type="entry name" value="S-ADENOSYLMETHIONINE DECARBOXYLASE PROENZYME"/>
    <property type="match status" value="1"/>
</dbReference>
<dbReference type="Pfam" id="PF02675">
    <property type="entry name" value="AdoMet_dc"/>
    <property type="match status" value="1"/>
</dbReference>
<dbReference type="PIRSF" id="PIRSF001356">
    <property type="entry name" value="SAM_decarboxylas"/>
    <property type="match status" value="1"/>
</dbReference>
<dbReference type="SUPFAM" id="SSF56276">
    <property type="entry name" value="S-adenosylmethionine decarboxylase"/>
    <property type="match status" value="1"/>
</dbReference>
<feature type="chain" id="PRO_0000364353" description="S-adenosylmethionine decarboxylase beta chain" evidence="1">
    <location>
        <begin position="1"/>
        <end position="125"/>
    </location>
</feature>
<feature type="chain" id="PRO_0000364354" description="S-adenosylmethionine decarboxylase alpha chain" evidence="1">
    <location>
        <begin position="126"/>
        <end position="276"/>
    </location>
</feature>
<feature type="active site" description="Schiff-base intermediate with substrate; via pyruvic acid" evidence="1">
    <location>
        <position position="126"/>
    </location>
</feature>
<feature type="active site" description="Proton acceptor; for processing activity" evidence="1">
    <location>
        <position position="131"/>
    </location>
</feature>
<feature type="active site" description="Proton donor; for catalytic activity" evidence="1">
    <location>
        <position position="154"/>
    </location>
</feature>
<feature type="site" description="Cleavage (non-hydrolytic); by autolysis" evidence="1">
    <location>
        <begin position="125"/>
        <end position="126"/>
    </location>
</feature>
<feature type="modified residue" description="Pyruvic acid (Ser); by autocatalysis" evidence="1">
    <location>
        <position position="126"/>
    </location>
</feature>
<protein>
    <recommendedName>
        <fullName evidence="1">S-adenosylmethionine decarboxylase proenzyme</fullName>
        <shortName evidence="1">AdoMetDC</shortName>
        <shortName evidence="1">SAMDC</shortName>
        <ecNumber evidence="1">4.1.1.50</ecNumber>
    </recommendedName>
    <component>
        <recommendedName>
            <fullName evidence="1">S-adenosylmethionine decarboxylase beta chain</fullName>
        </recommendedName>
    </component>
    <component>
        <recommendedName>
            <fullName evidence="1">S-adenosylmethionine decarboxylase alpha chain</fullName>
        </recommendedName>
    </component>
</protein>
<accession>Q0VMX9</accession>
<evidence type="ECO:0000255" key="1">
    <source>
        <dbReference type="HAMAP-Rule" id="MF_00465"/>
    </source>
</evidence>
<sequence>MKRPWGKAVVKDPNPKITVHGFNNLTKSLSFNIFDIAYAKTEQHRQEYIEYIDELYNAERLTEILTNVTNIIGANILNVARQDYEPQGASVTMLIAEHETPPVGTDWDEEGPGPLPETVVAHLDKSHVTVHTYPESHPDNGISTFRVDVDVSTCGVISPLRALNYLIHSFDSDIVTVDYRVRGMTRDLDGTKHYIDHDINSIQNFLTEDTQNAYQMIDVNVYQENIFHTKMLLKDFDIDNYLFGAGRDEFAQTELDQIEERMKTEMLEIFYSRNLG</sequence>
<organism>
    <name type="scientific">Alcanivorax borkumensis (strain ATCC 700651 / DSM 11573 / NCIMB 13689 / SK2)</name>
    <dbReference type="NCBI Taxonomy" id="393595"/>
    <lineage>
        <taxon>Bacteria</taxon>
        <taxon>Pseudomonadati</taxon>
        <taxon>Pseudomonadota</taxon>
        <taxon>Gammaproteobacteria</taxon>
        <taxon>Oceanospirillales</taxon>
        <taxon>Alcanivoracaceae</taxon>
        <taxon>Alcanivorax</taxon>
    </lineage>
</organism>
<gene>
    <name evidence="1" type="primary">speD</name>
    <name type="ordered locus">ABO_2021</name>
</gene>
<keyword id="KW-0068">Autocatalytic cleavage</keyword>
<keyword id="KW-0210">Decarboxylase</keyword>
<keyword id="KW-0456">Lyase</keyword>
<keyword id="KW-0620">Polyamine biosynthesis</keyword>
<keyword id="KW-0670">Pyruvate</keyword>
<keyword id="KW-1185">Reference proteome</keyword>
<keyword id="KW-0949">S-adenosyl-L-methionine</keyword>
<keyword id="KW-0704">Schiff base</keyword>
<keyword id="KW-0745">Spermidine biosynthesis</keyword>
<keyword id="KW-0865">Zymogen</keyword>
<proteinExistence type="inferred from homology"/>
<name>SPED_ALCBS</name>